<reference key="1">
    <citation type="journal article" date="2006" name="Virology">
        <title>His1 and His2 are distantly related, spindle-shaped haloviruses belonging to the novel virus group, Salterprovirus.</title>
        <authorList>
            <person name="Bath C."/>
            <person name="Cukalac T."/>
            <person name="Porter K."/>
            <person name="Dyall-Smith M.L."/>
        </authorList>
    </citation>
    <scope>NUCLEOTIDE SEQUENCE [GENOMIC DNA]</scope>
</reference>
<accession>Q25BG2</accession>
<sequence>MIEKGQEPKSRYMPIAFILEVYYTIFGPSIYCPECNTFWRGFYSQHMKYCHFCQTELQERKF</sequence>
<organism>
    <name type="scientific">His1 virus (isolate Australia/Victoria)</name>
    <name type="common">His1V</name>
    <name type="synonym">Haloarcula hispanica virus 1</name>
    <dbReference type="NCBI Taxonomy" id="654912"/>
    <lineage>
        <taxon>Viruses</taxon>
        <taxon>Viruses incertae sedis</taxon>
        <taxon>Halspiviridae</taxon>
        <taxon>Salterprovirus</taxon>
        <taxon>Salterprovirus His1</taxon>
    </lineage>
</organism>
<dbReference type="EMBL" id="AF191796">
    <property type="protein sequence ID" value="AAQ13760.1"/>
    <property type="molecule type" value="Genomic_DNA"/>
</dbReference>
<dbReference type="RefSeq" id="YP_529545.1">
    <property type="nucleotide sequence ID" value="NC_007914.1"/>
</dbReference>
<dbReference type="KEGG" id="vg:5142392"/>
<dbReference type="Proteomes" id="UP000007024">
    <property type="component" value="Segment"/>
</dbReference>
<gene>
    <name type="ORF">ORF33</name>
</gene>
<organismHost>
    <name type="scientific">Haloarcula hispanica</name>
    <dbReference type="NCBI Taxonomy" id="51589"/>
</organismHost>
<keyword id="KW-1185">Reference proteome</keyword>
<feature type="chain" id="PRO_0000384900" description="Uncharacterized protein ORF33">
    <location>
        <begin position="1"/>
        <end position="62"/>
    </location>
</feature>
<protein>
    <recommendedName>
        <fullName>Uncharacterized protein ORF33</fullName>
    </recommendedName>
</protein>
<name>Y033_HIS1I</name>
<proteinExistence type="predicted"/>